<comment type="function">
    <text evidence="1">Catalyzes the attachment of isoleucine to tRNA(Ile). As IleRS can inadvertently accommodate and process structurally similar amino acids such as valine, to avoid such errors it has two additional distinct tRNA(Ile)-dependent editing activities. One activity is designated as 'pretransfer' editing and involves the hydrolysis of activated Val-AMP. The other activity is designated 'posttransfer' editing and involves deacylation of mischarged Val-tRNA(Ile).</text>
</comment>
<comment type="catalytic activity">
    <reaction evidence="1">
        <text>tRNA(Ile) + L-isoleucine + ATP = L-isoleucyl-tRNA(Ile) + AMP + diphosphate</text>
        <dbReference type="Rhea" id="RHEA:11060"/>
        <dbReference type="Rhea" id="RHEA-COMP:9666"/>
        <dbReference type="Rhea" id="RHEA-COMP:9695"/>
        <dbReference type="ChEBI" id="CHEBI:30616"/>
        <dbReference type="ChEBI" id="CHEBI:33019"/>
        <dbReference type="ChEBI" id="CHEBI:58045"/>
        <dbReference type="ChEBI" id="CHEBI:78442"/>
        <dbReference type="ChEBI" id="CHEBI:78528"/>
        <dbReference type="ChEBI" id="CHEBI:456215"/>
        <dbReference type="EC" id="6.1.1.5"/>
    </reaction>
</comment>
<comment type="cofactor">
    <cofactor evidence="1">
        <name>Zn(2+)</name>
        <dbReference type="ChEBI" id="CHEBI:29105"/>
    </cofactor>
    <text evidence="1">Binds 1 zinc ion per subunit.</text>
</comment>
<comment type="subunit">
    <text evidence="1">Monomer.</text>
</comment>
<comment type="subcellular location">
    <subcellularLocation>
        <location evidence="1">Cytoplasm</location>
    </subcellularLocation>
</comment>
<comment type="domain">
    <text evidence="1">IleRS has two distinct active sites: one for aminoacylation and one for editing. The misactivated valine is translocated from the active site to the editing site, which sterically excludes the correctly activated isoleucine. The single editing site contains two valyl binding pockets, one specific for each substrate (Val-AMP or Val-tRNA(Ile)).</text>
</comment>
<comment type="similarity">
    <text evidence="1">Belongs to the class-I aminoacyl-tRNA synthetase family. IleS type 1 subfamily.</text>
</comment>
<gene>
    <name evidence="1" type="primary">ileS</name>
    <name type="ordered locus">ESA_03312</name>
</gene>
<organism>
    <name type="scientific">Cronobacter sakazakii (strain ATCC BAA-894)</name>
    <name type="common">Enterobacter sakazakii</name>
    <dbReference type="NCBI Taxonomy" id="290339"/>
    <lineage>
        <taxon>Bacteria</taxon>
        <taxon>Pseudomonadati</taxon>
        <taxon>Pseudomonadota</taxon>
        <taxon>Gammaproteobacteria</taxon>
        <taxon>Enterobacterales</taxon>
        <taxon>Enterobacteriaceae</taxon>
        <taxon>Cronobacter</taxon>
    </lineage>
</organism>
<sequence>MSDYKSTLNLPETGFPMRGDLAKREPGMLARWTDDDLYGIIRAAKKGKKTFILHDGPPYANGSIHIGHSVNKILKDIIVKSKGLAGYDSPYVPGWDCHGLPIELKVEQEFGKPGEKFTAAEFRAKCREYAATQVDGQRKDFIRLGVLGDWSHPYLTMDFNTEANIIRALGKIIGNGHLHKGAKPVHWCVDCRSALAEAEVEYYDKTSPSIDVAFNAVDAAAVAAKFGAQNVNGPVSLVIWTTTPWTLPANRAISLHAEIDYVLVQIEGQALIVAKDLLESVMKRINVADYTVLGETKGAQLELMRFTHPFMGFDVPAILGEHVTLDAGTGAVHTAGGHGPDDYTISQKYGLEIANPVGPDGTYLPGTYPGLDGVNVFKANDQIVELLREKGALLNVAKLLHSYPCCWRHKTPIIFRATPQWFVSMDQKGLRAQSLKEIKGVQWIPDWGQARIESMVANRPDWCISRQRTWGVPMSLFVHKETQELHPRTLELMEEVAKRVEQDGIQAWWDLDPRDIMGDDADVYEKVPDTLDVWFDSGSTHSSVVDVRPEFAGHAADMYLEGSDQHRGWFMSSLMISTAMKGKAPYRQVLTHGFTVDGQGRKMSKSIGNTVSPQDVMNKLGADILRLWVASTDYTGEMAVSDEILKRAADAYRRIRNTARFLLANLNGFDPAKDMVKPEEMVVLDRWAVGCAKAAQDDIVKAYEAYDFHEVVQRLMRFCSIEMGSFYLDIIKDRQYTAKADSVARRSCQTALYHISEALVRWIAPILSFTADEVWGYLPGEREKYVFTGEWYDGLFGLADTEAMNDAYWDALLKVRGEVNKVIEQARADKKVGGSLEAAVTLYAEPELAAKLTALGEELRFVLLTSQAKVEDYASAAADAQQSELLKGLKVALAKAEGEKCPRCWHYTTDIGKVAEHAEICGRCVSNVAGDGEKRKFA</sequence>
<name>SYI_CROS8</name>
<accession>A7MIM3</accession>
<proteinExistence type="inferred from homology"/>
<evidence type="ECO:0000255" key="1">
    <source>
        <dbReference type="HAMAP-Rule" id="MF_02002"/>
    </source>
</evidence>
<feature type="chain" id="PRO_1000022064" description="Isoleucine--tRNA ligase">
    <location>
        <begin position="1"/>
        <end position="938"/>
    </location>
</feature>
<feature type="short sequence motif" description="'HIGH' region">
    <location>
        <begin position="58"/>
        <end position="68"/>
    </location>
</feature>
<feature type="short sequence motif" description="'KMSKS' region">
    <location>
        <begin position="602"/>
        <end position="606"/>
    </location>
</feature>
<feature type="binding site" evidence="1">
    <location>
        <position position="561"/>
    </location>
    <ligand>
        <name>L-isoleucyl-5'-AMP</name>
        <dbReference type="ChEBI" id="CHEBI:178002"/>
    </ligand>
</feature>
<feature type="binding site" evidence="1">
    <location>
        <position position="605"/>
    </location>
    <ligand>
        <name>ATP</name>
        <dbReference type="ChEBI" id="CHEBI:30616"/>
    </ligand>
</feature>
<feature type="binding site" evidence="1">
    <location>
        <position position="901"/>
    </location>
    <ligand>
        <name>Zn(2+)</name>
        <dbReference type="ChEBI" id="CHEBI:29105"/>
    </ligand>
</feature>
<feature type="binding site" evidence="1">
    <location>
        <position position="904"/>
    </location>
    <ligand>
        <name>Zn(2+)</name>
        <dbReference type="ChEBI" id="CHEBI:29105"/>
    </ligand>
</feature>
<feature type="binding site" evidence="1">
    <location>
        <position position="921"/>
    </location>
    <ligand>
        <name>Zn(2+)</name>
        <dbReference type="ChEBI" id="CHEBI:29105"/>
    </ligand>
</feature>
<feature type="binding site" evidence="1">
    <location>
        <position position="924"/>
    </location>
    <ligand>
        <name>Zn(2+)</name>
        <dbReference type="ChEBI" id="CHEBI:29105"/>
    </ligand>
</feature>
<keyword id="KW-0030">Aminoacyl-tRNA synthetase</keyword>
<keyword id="KW-0067">ATP-binding</keyword>
<keyword id="KW-0963">Cytoplasm</keyword>
<keyword id="KW-0436">Ligase</keyword>
<keyword id="KW-0479">Metal-binding</keyword>
<keyword id="KW-0547">Nucleotide-binding</keyword>
<keyword id="KW-0648">Protein biosynthesis</keyword>
<keyword id="KW-1185">Reference proteome</keyword>
<keyword id="KW-0862">Zinc</keyword>
<reference key="1">
    <citation type="journal article" date="2010" name="PLoS ONE">
        <title>Genome sequence of Cronobacter sakazakii BAA-894 and comparative genomic hybridization analysis with other Cronobacter species.</title>
        <authorList>
            <person name="Kucerova E."/>
            <person name="Clifton S.W."/>
            <person name="Xia X.Q."/>
            <person name="Long F."/>
            <person name="Porwollik S."/>
            <person name="Fulton L."/>
            <person name="Fronick C."/>
            <person name="Minx P."/>
            <person name="Kyung K."/>
            <person name="Warren W."/>
            <person name="Fulton R."/>
            <person name="Feng D."/>
            <person name="Wollam A."/>
            <person name="Shah N."/>
            <person name="Bhonagiri V."/>
            <person name="Nash W.E."/>
            <person name="Hallsworth-Pepin K."/>
            <person name="Wilson R.K."/>
            <person name="McClelland M."/>
            <person name="Forsythe S.J."/>
        </authorList>
    </citation>
    <scope>NUCLEOTIDE SEQUENCE [LARGE SCALE GENOMIC DNA]</scope>
    <source>
        <strain>ATCC BAA-894</strain>
    </source>
</reference>
<protein>
    <recommendedName>
        <fullName evidence="1">Isoleucine--tRNA ligase</fullName>
        <ecNumber evidence="1">6.1.1.5</ecNumber>
    </recommendedName>
    <alternativeName>
        <fullName evidence="1">Isoleucyl-tRNA synthetase</fullName>
        <shortName evidence="1">IleRS</shortName>
    </alternativeName>
</protein>
<dbReference type="EC" id="6.1.1.5" evidence="1"/>
<dbReference type="EMBL" id="CP000783">
    <property type="protein sequence ID" value="ABU78533.1"/>
    <property type="molecule type" value="Genomic_DNA"/>
</dbReference>
<dbReference type="RefSeq" id="WP_012125802.1">
    <property type="nucleotide sequence ID" value="NC_009778.1"/>
</dbReference>
<dbReference type="SMR" id="A7MIM3"/>
<dbReference type="KEGG" id="esa:ESA_03312"/>
<dbReference type="PATRIC" id="fig|290339.8.peg.2940"/>
<dbReference type="HOGENOM" id="CLU_001493_7_1_6"/>
<dbReference type="Proteomes" id="UP000000260">
    <property type="component" value="Chromosome"/>
</dbReference>
<dbReference type="GO" id="GO:0005829">
    <property type="term" value="C:cytosol"/>
    <property type="evidence" value="ECO:0007669"/>
    <property type="project" value="TreeGrafter"/>
</dbReference>
<dbReference type="GO" id="GO:0002161">
    <property type="term" value="F:aminoacyl-tRNA deacylase activity"/>
    <property type="evidence" value="ECO:0007669"/>
    <property type="project" value="InterPro"/>
</dbReference>
<dbReference type="GO" id="GO:0005524">
    <property type="term" value="F:ATP binding"/>
    <property type="evidence" value="ECO:0007669"/>
    <property type="project" value="UniProtKB-UniRule"/>
</dbReference>
<dbReference type="GO" id="GO:0004822">
    <property type="term" value="F:isoleucine-tRNA ligase activity"/>
    <property type="evidence" value="ECO:0007669"/>
    <property type="project" value="UniProtKB-UniRule"/>
</dbReference>
<dbReference type="GO" id="GO:0000049">
    <property type="term" value="F:tRNA binding"/>
    <property type="evidence" value="ECO:0007669"/>
    <property type="project" value="InterPro"/>
</dbReference>
<dbReference type="GO" id="GO:0008270">
    <property type="term" value="F:zinc ion binding"/>
    <property type="evidence" value="ECO:0007669"/>
    <property type="project" value="UniProtKB-UniRule"/>
</dbReference>
<dbReference type="GO" id="GO:0006428">
    <property type="term" value="P:isoleucyl-tRNA aminoacylation"/>
    <property type="evidence" value="ECO:0007669"/>
    <property type="project" value="UniProtKB-UniRule"/>
</dbReference>
<dbReference type="CDD" id="cd07960">
    <property type="entry name" value="Anticodon_Ia_Ile_BEm"/>
    <property type="match status" value="1"/>
</dbReference>
<dbReference type="CDD" id="cd00818">
    <property type="entry name" value="IleRS_core"/>
    <property type="match status" value="1"/>
</dbReference>
<dbReference type="FunFam" id="1.10.730.20:FF:000001">
    <property type="entry name" value="Isoleucine--tRNA ligase"/>
    <property type="match status" value="1"/>
</dbReference>
<dbReference type="FunFam" id="3.40.50.620:FF:000042">
    <property type="entry name" value="Isoleucine--tRNA ligase"/>
    <property type="match status" value="1"/>
</dbReference>
<dbReference type="FunFam" id="3.40.50.620:FF:000048">
    <property type="entry name" value="Isoleucine--tRNA ligase"/>
    <property type="match status" value="1"/>
</dbReference>
<dbReference type="FunFam" id="3.90.740.10:FF:000002">
    <property type="entry name" value="Isoleucine--tRNA ligase"/>
    <property type="match status" value="1"/>
</dbReference>
<dbReference type="Gene3D" id="1.10.730.20">
    <property type="match status" value="1"/>
</dbReference>
<dbReference type="Gene3D" id="3.40.50.620">
    <property type="entry name" value="HUPs"/>
    <property type="match status" value="2"/>
</dbReference>
<dbReference type="Gene3D" id="3.90.740.10">
    <property type="entry name" value="Valyl/Leucyl/Isoleucyl-tRNA synthetase, editing domain"/>
    <property type="match status" value="1"/>
</dbReference>
<dbReference type="HAMAP" id="MF_02002">
    <property type="entry name" value="Ile_tRNA_synth_type1"/>
    <property type="match status" value="1"/>
</dbReference>
<dbReference type="InterPro" id="IPR001412">
    <property type="entry name" value="aa-tRNA-synth_I_CS"/>
</dbReference>
<dbReference type="InterPro" id="IPR002300">
    <property type="entry name" value="aa-tRNA-synth_Ia"/>
</dbReference>
<dbReference type="InterPro" id="IPR033708">
    <property type="entry name" value="Anticodon_Ile_BEm"/>
</dbReference>
<dbReference type="InterPro" id="IPR002301">
    <property type="entry name" value="Ile-tRNA-ligase"/>
</dbReference>
<dbReference type="InterPro" id="IPR023585">
    <property type="entry name" value="Ile-tRNA-ligase_type1"/>
</dbReference>
<dbReference type="InterPro" id="IPR050081">
    <property type="entry name" value="Ile-tRNA_ligase"/>
</dbReference>
<dbReference type="InterPro" id="IPR013155">
    <property type="entry name" value="M/V/L/I-tRNA-synth_anticd-bd"/>
</dbReference>
<dbReference type="InterPro" id="IPR014729">
    <property type="entry name" value="Rossmann-like_a/b/a_fold"/>
</dbReference>
<dbReference type="InterPro" id="IPR009080">
    <property type="entry name" value="tRNAsynth_Ia_anticodon-bd"/>
</dbReference>
<dbReference type="InterPro" id="IPR009008">
    <property type="entry name" value="Val/Leu/Ile-tRNA-synth_edit"/>
</dbReference>
<dbReference type="InterPro" id="IPR010663">
    <property type="entry name" value="Znf_FPG/IleRS"/>
</dbReference>
<dbReference type="NCBIfam" id="TIGR00392">
    <property type="entry name" value="ileS"/>
    <property type="match status" value="1"/>
</dbReference>
<dbReference type="PANTHER" id="PTHR42765:SF1">
    <property type="entry name" value="ISOLEUCINE--TRNA LIGASE, MITOCHONDRIAL"/>
    <property type="match status" value="1"/>
</dbReference>
<dbReference type="PANTHER" id="PTHR42765">
    <property type="entry name" value="SOLEUCYL-TRNA SYNTHETASE"/>
    <property type="match status" value="1"/>
</dbReference>
<dbReference type="Pfam" id="PF08264">
    <property type="entry name" value="Anticodon_1"/>
    <property type="match status" value="1"/>
</dbReference>
<dbReference type="Pfam" id="PF00133">
    <property type="entry name" value="tRNA-synt_1"/>
    <property type="match status" value="1"/>
</dbReference>
<dbReference type="Pfam" id="PF06827">
    <property type="entry name" value="zf-FPG_IleRS"/>
    <property type="match status" value="1"/>
</dbReference>
<dbReference type="PRINTS" id="PR00984">
    <property type="entry name" value="TRNASYNTHILE"/>
</dbReference>
<dbReference type="SUPFAM" id="SSF47323">
    <property type="entry name" value="Anticodon-binding domain of a subclass of class I aminoacyl-tRNA synthetases"/>
    <property type="match status" value="1"/>
</dbReference>
<dbReference type="SUPFAM" id="SSF52374">
    <property type="entry name" value="Nucleotidylyl transferase"/>
    <property type="match status" value="1"/>
</dbReference>
<dbReference type="SUPFAM" id="SSF50677">
    <property type="entry name" value="ValRS/IleRS/LeuRS editing domain"/>
    <property type="match status" value="1"/>
</dbReference>
<dbReference type="PROSITE" id="PS00178">
    <property type="entry name" value="AA_TRNA_LIGASE_I"/>
    <property type="match status" value="1"/>
</dbReference>